<dbReference type="EMBL" id="AJ235270">
    <property type="protein sequence ID" value="CAA14574.1"/>
    <property type="molecule type" value="Genomic_DNA"/>
</dbReference>
<dbReference type="PIR" id="G71719">
    <property type="entry name" value="G71719"/>
</dbReference>
<dbReference type="RefSeq" id="NP_220497.1">
    <property type="nucleotide sequence ID" value="NC_000963.1"/>
</dbReference>
<dbReference type="RefSeq" id="WP_010886211.1">
    <property type="nucleotide sequence ID" value="NC_000963.1"/>
</dbReference>
<dbReference type="STRING" id="272947.gene:17555188"/>
<dbReference type="EnsemblBacteria" id="CAA14574">
    <property type="protein sequence ID" value="CAA14574"/>
    <property type="gene ID" value="CAA14574"/>
</dbReference>
<dbReference type="KEGG" id="rpr:RP105"/>
<dbReference type="PATRIC" id="fig|272947.5.peg.107"/>
<dbReference type="eggNOG" id="COG3704">
    <property type="taxonomic scope" value="Bacteria"/>
</dbReference>
<dbReference type="HOGENOM" id="CLU_027273_0_0_5"/>
<dbReference type="OrthoDB" id="7163542at2"/>
<dbReference type="Proteomes" id="UP000002480">
    <property type="component" value="Chromosome"/>
</dbReference>
<dbReference type="GO" id="GO:0005886">
    <property type="term" value="C:plasma membrane"/>
    <property type="evidence" value="ECO:0007669"/>
    <property type="project" value="UniProtKB-SubCell"/>
</dbReference>
<dbReference type="GO" id="GO:0030255">
    <property type="term" value="P:protein secretion by the type IV secretion system"/>
    <property type="evidence" value="ECO:0007669"/>
    <property type="project" value="InterPro"/>
</dbReference>
<dbReference type="InterPro" id="IPR007688">
    <property type="entry name" value="Conjugal_tfr_TrbL/VirB6"/>
</dbReference>
<dbReference type="Pfam" id="PF04610">
    <property type="entry name" value="TrbL"/>
    <property type="match status" value="1"/>
</dbReference>
<organism>
    <name type="scientific">Rickettsia prowazekii (strain Madrid E)</name>
    <dbReference type="NCBI Taxonomy" id="272947"/>
    <lineage>
        <taxon>Bacteria</taxon>
        <taxon>Pseudomonadati</taxon>
        <taxon>Pseudomonadota</taxon>
        <taxon>Alphaproteobacteria</taxon>
        <taxon>Rickettsiales</taxon>
        <taxon>Rickettsiaceae</taxon>
        <taxon>Rickettsieae</taxon>
        <taxon>Rickettsia</taxon>
        <taxon>typhus group</taxon>
    </lineage>
</organism>
<feature type="signal peptide" evidence="1">
    <location>
        <begin position="1"/>
        <end position="24"/>
    </location>
</feature>
<feature type="chain" id="PRO_0000269210" description="Uncharacterized protein RP105">
    <location>
        <begin position="25"/>
        <end position="672"/>
    </location>
</feature>
<feature type="transmembrane region" description="Helical" evidence="1">
    <location>
        <begin position="226"/>
        <end position="246"/>
    </location>
</feature>
<feature type="transmembrane region" description="Helical" evidence="1">
    <location>
        <begin position="254"/>
        <end position="274"/>
    </location>
</feature>
<feature type="transmembrane region" description="Helical" evidence="1">
    <location>
        <begin position="410"/>
        <end position="430"/>
    </location>
</feature>
<feature type="transmembrane region" description="Helical" evidence="1">
    <location>
        <begin position="436"/>
        <end position="456"/>
    </location>
</feature>
<feature type="transmembrane region" description="Helical" evidence="1">
    <location>
        <begin position="469"/>
        <end position="489"/>
    </location>
</feature>
<feature type="transmembrane region" description="Helical" evidence="1">
    <location>
        <begin position="562"/>
        <end position="582"/>
    </location>
</feature>
<feature type="region of interest" description="Disordered" evidence="2">
    <location>
        <begin position="363"/>
        <end position="384"/>
    </location>
</feature>
<feature type="region of interest" description="Disordered" evidence="2">
    <location>
        <begin position="628"/>
        <end position="672"/>
    </location>
</feature>
<feature type="compositionally biased region" description="Polar residues" evidence="2">
    <location>
        <begin position="363"/>
        <end position="372"/>
    </location>
</feature>
<feature type="compositionally biased region" description="Basic and acidic residues" evidence="2">
    <location>
        <begin position="628"/>
        <end position="646"/>
    </location>
</feature>
<keyword id="KW-1003">Cell membrane</keyword>
<keyword id="KW-0472">Membrane</keyword>
<keyword id="KW-1185">Reference proteome</keyword>
<keyword id="KW-0732">Signal</keyword>
<keyword id="KW-0812">Transmembrane</keyword>
<keyword id="KW-1133">Transmembrane helix</keyword>
<protein>
    <recommendedName>
        <fullName>Uncharacterized protein RP105</fullName>
    </recommendedName>
</protein>
<sequence>MKTLKVLKIFIIVYISSVSLESFAGFGESCSNLPITSDGYLETYTAYGYIIRSIDMKDPRGNCNPSTSSITFCFKNVEGSASPCTIYTLNEGDTRKISDLSTDNNPDLGANTVLKNIVLTVKKFGNDLCLAMPTSRGPMPVACKSLSVTPTATKPKDENCNIGKSCYTGANYSQSLINFSGLAVQCLSETLNKIFFTGSSCSAQDQNSRITHLASFATFQGYLKRIIGAALILYTMFFAFNMALNKEYATTEKITLFIIKFLFVVYFSIGLGPLDFSGGQPVKENGMLKYGLPLLTGAAPDFAGMIFNAAGSRGLCQFDNTKYKDGYKFYGLWDAIDCRIGYYLGLDLLYNIDKNGILGRPVSNGTSGNNKPIPNFDPDGKKDRPHDLSKAGALRFFTVMFGFFMSGHVIILVAGMVFSVIFLSILLYFITHYLVCMVTIYVMTYISPIFIPMVLFTRTKAYFDGWLKVCISCALQPAVVAGFIALLITMYDSAIFKNCEFLRYDYEKGDIRFSTFELRLPSIDADKCQESFGYKMLKYYAGEGWEEHLLILFPIKSIVRDVVSILAELLCVLIFSVIFYYFSKSIGRFAADLTNGPNMDAVTASPTKIVDLVKKGAAFLKDASVHEHGKSSLGDKPDIGNKRKDGAQQGEDAVNSSGGEVADLASGSGGGK</sequence>
<name>Y105_RICPR</name>
<comment type="subcellular location">
    <subcellularLocation>
        <location evidence="3">Cell membrane</location>
        <topology evidence="3">Multi-pass membrane protein</topology>
    </subcellularLocation>
</comment>
<comment type="similarity">
    <text evidence="3">Belongs to the TrbL/VirB6 family.</text>
</comment>
<accession>Q9ZE43</accession>
<gene>
    <name type="ordered locus">RP105</name>
</gene>
<reference key="1">
    <citation type="journal article" date="1998" name="Nature">
        <title>The genome sequence of Rickettsia prowazekii and the origin of mitochondria.</title>
        <authorList>
            <person name="Andersson S.G.E."/>
            <person name="Zomorodipour A."/>
            <person name="Andersson J.O."/>
            <person name="Sicheritz-Ponten T."/>
            <person name="Alsmark U.C.M."/>
            <person name="Podowski R.M."/>
            <person name="Naeslund A.K."/>
            <person name="Eriksson A.-S."/>
            <person name="Winkler H.H."/>
            <person name="Kurland C.G."/>
        </authorList>
    </citation>
    <scope>NUCLEOTIDE SEQUENCE [LARGE SCALE GENOMIC DNA]</scope>
    <source>
        <strain>Madrid E</strain>
    </source>
</reference>
<evidence type="ECO:0000255" key="1"/>
<evidence type="ECO:0000256" key="2">
    <source>
        <dbReference type="SAM" id="MobiDB-lite"/>
    </source>
</evidence>
<evidence type="ECO:0000305" key="3"/>
<proteinExistence type="inferred from homology"/>